<comment type="function">
    <text evidence="1">Involved in the transport of maltose and maltodextrins.</text>
</comment>
<comment type="catalytic activity">
    <reaction evidence="1">
        <text>beta-maltose(in) = beta-maltose(out)</text>
        <dbReference type="Rhea" id="RHEA:29731"/>
        <dbReference type="ChEBI" id="CHEBI:18147"/>
    </reaction>
</comment>
<comment type="subunit">
    <text evidence="1">Homotrimer formed of three 18-stranded antiparallel beta-barrels, containing three independent channels.</text>
</comment>
<comment type="subcellular location">
    <subcellularLocation>
        <location evidence="1">Cell outer membrane</location>
        <topology evidence="1">Multi-pass membrane protein</topology>
    </subcellularLocation>
</comment>
<comment type="induction">
    <text evidence="1">By maltose.</text>
</comment>
<comment type="similarity">
    <text evidence="1">Belongs to the porin LamB (TC 1.B.3) family.</text>
</comment>
<comment type="sequence caution" evidence="2">
    <conflict type="erroneous initiation">
        <sequence resource="EMBL-CDS" id="ABV14955"/>
    </conflict>
</comment>
<gene>
    <name evidence="1" type="primary">lamB</name>
    <name type="ordered locus">CKO_03879</name>
</gene>
<reference key="1">
    <citation type="submission" date="2007-08" db="EMBL/GenBank/DDBJ databases">
        <authorList>
            <consortium name="The Citrobacter koseri Genome Sequencing Project"/>
            <person name="McClelland M."/>
            <person name="Sanderson E.K."/>
            <person name="Porwollik S."/>
            <person name="Spieth J."/>
            <person name="Clifton W.S."/>
            <person name="Latreille P."/>
            <person name="Courtney L."/>
            <person name="Wang C."/>
            <person name="Pepin K."/>
            <person name="Bhonagiri V."/>
            <person name="Nash W."/>
            <person name="Johnson M."/>
            <person name="Thiruvilangam P."/>
            <person name="Wilson R."/>
        </authorList>
    </citation>
    <scope>NUCLEOTIDE SEQUENCE [LARGE SCALE GENOMIC DNA]</scope>
    <source>
        <strain>ATCC BAA-895 / CDC 4225-83 / SGSC4696</strain>
    </source>
</reference>
<protein>
    <recommendedName>
        <fullName evidence="1">Maltoporin</fullName>
    </recommendedName>
    <alternativeName>
        <fullName evidence="1">Maltose-inducible porin</fullName>
    </alternativeName>
</protein>
<name>LAMB_CITK8</name>
<feature type="signal peptide" evidence="1">
    <location>
        <begin position="1"/>
        <end position="24"/>
    </location>
</feature>
<feature type="chain" id="PRO_0000322011" description="Maltoporin">
    <location>
        <begin position="25"/>
        <end position="449"/>
    </location>
</feature>
<feature type="site" description="Greasy slide, important in sugar transport" evidence="1">
    <location>
        <position position="30"/>
    </location>
</feature>
<feature type="site" description="Greasy slide, important in sugar transport" evidence="1">
    <location>
        <position position="65"/>
    </location>
</feature>
<feature type="site" description="Greasy slide, important in sugar transport" evidence="1">
    <location>
        <position position="98"/>
    </location>
</feature>
<feature type="site" description="Important in sugar transport" evidence="1">
    <location>
        <position position="142"/>
    </location>
</feature>
<feature type="site" description="Greasy slide, important in sugar transport" evidence="1">
    <location>
        <position position="251"/>
    </location>
</feature>
<feature type="site" description="Greasy slide, important in sugar transport" evidence="1">
    <location>
        <position position="390"/>
    </location>
</feature>
<feature type="site" description="Greasy slide, important in sugar transport" evidence="1">
    <location>
        <position position="448"/>
    </location>
</feature>
<evidence type="ECO:0000255" key="1">
    <source>
        <dbReference type="HAMAP-Rule" id="MF_01301"/>
    </source>
</evidence>
<evidence type="ECO:0000305" key="2"/>
<proteinExistence type="inferred from homology"/>
<sequence>MITLRKLPLAVAVAAGVMSAQAMAVDFHGYARSGIGWTGSGGEQQCFQATGAQSKYRLGNECETYAELKLGQEVWKEGDKSFYFDTNVAYSVAQQNDWEATDPAFREANVQGKNLIDWLPGSTIWAGKRFYQRHDVHMIDFYYWDISGPGAGIENIDLGFGKLSLAATRSQEAGGSYTFSSQDIYNSSKDTANDVFDVRLAGLETNPDGVLELGVDYGRANTTDDYRLADGASKDGWMFTAEHTQSMLKGYNKFVVQYATDAMTTQGKGIPQGSYGSTFDIGEGDDQLHYVDRYVNNNGKLWRILDHGAISLGDRWDLMYVGMFQKQDLDNDLGTDWWTVGVRPMFKWTPIMSTLLEVGYDNVKSQQTGDRNNQYKITLAQQWQAGDSIWSRPAIRLFATYAKWDEKWGYIKDGDNTLRYAASNNSGFNTTSRGDNDEWSFGAQMEIWW</sequence>
<keyword id="KW-0998">Cell outer membrane</keyword>
<keyword id="KW-0406">Ion transport</keyword>
<keyword id="KW-0472">Membrane</keyword>
<keyword id="KW-0626">Porin</keyword>
<keyword id="KW-1185">Reference proteome</keyword>
<keyword id="KW-0732">Signal</keyword>
<keyword id="KW-0762">Sugar transport</keyword>
<keyword id="KW-0812">Transmembrane</keyword>
<keyword id="KW-1134">Transmembrane beta strand</keyword>
<keyword id="KW-0813">Transport</keyword>
<dbReference type="EMBL" id="CP000822">
    <property type="protein sequence ID" value="ABV14955.1"/>
    <property type="status" value="ALT_INIT"/>
    <property type="molecule type" value="Genomic_DNA"/>
</dbReference>
<dbReference type="BMRB" id="A8AN92"/>
<dbReference type="SMR" id="A8AN92"/>
<dbReference type="STRING" id="290338.CKO_03879"/>
<dbReference type="KEGG" id="cko:CKO_03879"/>
<dbReference type="HOGENOM" id="CLU_032473_4_1_6"/>
<dbReference type="Proteomes" id="UP000008148">
    <property type="component" value="Chromosome"/>
</dbReference>
<dbReference type="GO" id="GO:0009279">
    <property type="term" value="C:cell outer membrane"/>
    <property type="evidence" value="ECO:0007669"/>
    <property type="project" value="UniProtKB-SubCell"/>
</dbReference>
<dbReference type="GO" id="GO:0046930">
    <property type="term" value="C:pore complex"/>
    <property type="evidence" value="ECO:0007669"/>
    <property type="project" value="UniProtKB-KW"/>
</dbReference>
<dbReference type="GO" id="GO:0042958">
    <property type="term" value="F:maltodextrin transmembrane transporter activity"/>
    <property type="evidence" value="ECO:0007669"/>
    <property type="project" value="InterPro"/>
</dbReference>
<dbReference type="GO" id="GO:0015481">
    <property type="term" value="F:maltose transporting porin activity"/>
    <property type="evidence" value="ECO:0007669"/>
    <property type="project" value="InterPro"/>
</dbReference>
<dbReference type="GO" id="GO:0006811">
    <property type="term" value="P:monoatomic ion transport"/>
    <property type="evidence" value="ECO:0007669"/>
    <property type="project" value="UniProtKB-KW"/>
</dbReference>
<dbReference type="CDD" id="cd01346">
    <property type="entry name" value="Maltoporin-like"/>
    <property type="match status" value="1"/>
</dbReference>
<dbReference type="FunFam" id="2.40.170.10:FF:000001">
    <property type="entry name" value="Maltoporin"/>
    <property type="match status" value="1"/>
</dbReference>
<dbReference type="Gene3D" id="2.40.170.10">
    <property type="entry name" value="Porin, LamB type"/>
    <property type="match status" value="1"/>
</dbReference>
<dbReference type="HAMAP" id="MF_01301">
    <property type="entry name" value="LamB"/>
    <property type="match status" value="1"/>
</dbReference>
<dbReference type="InterPro" id="IPR050286">
    <property type="entry name" value="G_neg_Bact_CarbUptk_Porin"/>
</dbReference>
<dbReference type="InterPro" id="IPR023738">
    <property type="entry name" value="Maltoporin"/>
</dbReference>
<dbReference type="InterPro" id="IPR003192">
    <property type="entry name" value="Porin_LamB"/>
</dbReference>
<dbReference type="InterPro" id="IPR036998">
    <property type="entry name" value="Porin_LamB_sf"/>
</dbReference>
<dbReference type="NCBIfam" id="NF006860">
    <property type="entry name" value="PRK09360.1"/>
    <property type="match status" value="1"/>
</dbReference>
<dbReference type="PANTHER" id="PTHR38762">
    <property type="entry name" value="CRYPTIC OUTER MEMBRANE PORIN BGLH-RELATED"/>
    <property type="match status" value="1"/>
</dbReference>
<dbReference type="PANTHER" id="PTHR38762:SF1">
    <property type="entry name" value="CRYPTIC OUTER MEMBRANE PORIN BGLH-RELATED"/>
    <property type="match status" value="1"/>
</dbReference>
<dbReference type="Pfam" id="PF02264">
    <property type="entry name" value="LamB"/>
    <property type="match status" value="1"/>
</dbReference>
<dbReference type="SUPFAM" id="SSF56935">
    <property type="entry name" value="Porins"/>
    <property type="match status" value="1"/>
</dbReference>
<accession>A8AN92</accession>
<organism>
    <name type="scientific">Citrobacter koseri (strain ATCC BAA-895 / CDC 4225-83 / SGSC4696)</name>
    <dbReference type="NCBI Taxonomy" id="290338"/>
    <lineage>
        <taxon>Bacteria</taxon>
        <taxon>Pseudomonadati</taxon>
        <taxon>Pseudomonadota</taxon>
        <taxon>Gammaproteobacteria</taxon>
        <taxon>Enterobacterales</taxon>
        <taxon>Enterobacteriaceae</taxon>
        <taxon>Citrobacter</taxon>
    </lineage>
</organism>